<name>RCNR_ECOL5</name>
<comment type="function">
    <text evidence="1">Repressor of rcnA expression. Acts by binding specifically to the rcnA promoter in the absence of nickel and cobalt. In the presence of one of these metals, it has a weaker affinity for rcnA promoter (By similarity).</text>
</comment>
<comment type="subcellular location">
    <subcellularLocation>
        <location evidence="2">Cytoplasm</location>
    </subcellularLocation>
</comment>
<comment type="similarity">
    <text evidence="2">Belongs to the FrmR/RcnR family.</text>
</comment>
<reference key="1">
    <citation type="journal article" date="2006" name="Mol. Microbiol.">
        <title>Role of pathogenicity island-associated integrases in the genome plasticity of uropathogenic Escherichia coli strain 536.</title>
        <authorList>
            <person name="Hochhut B."/>
            <person name="Wilde C."/>
            <person name="Balling G."/>
            <person name="Middendorf B."/>
            <person name="Dobrindt U."/>
            <person name="Brzuszkiewicz E."/>
            <person name="Gottschalk G."/>
            <person name="Carniel E."/>
            <person name="Hacker J."/>
        </authorList>
    </citation>
    <scope>NUCLEOTIDE SEQUENCE [LARGE SCALE GENOMIC DNA]</scope>
    <source>
        <strain>536 / UPEC</strain>
    </source>
</reference>
<gene>
    <name type="primary">rcnR</name>
    <name type="ordered locus">ECP_2143</name>
</gene>
<sequence>MSHTIRDKQKLKARASKIQGQVVALKKMLDEPHECAAVLQQIAAIRGAVNGLMREVIKGHLTEHIVHQGDELKREEDLDVVLKVLDSYIK</sequence>
<evidence type="ECO:0000250" key="1"/>
<evidence type="ECO:0000305" key="2"/>
<feature type="chain" id="PRO_0000332696" description="Transcriptional repressor RcnR">
    <location>
        <begin position="1"/>
        <end position="90"/>
    </location>
</feature>
<organism>
    <name type="scientific">Escherichia coli O6:K15:H31 (strain 536 / UPEC)</name>
    <dbReference type="NCBI Taxonomy" id="362663"/>
    <lineage>
        <taxon>Bacteria</taxon>
        <taxon>Pseudomonadati</taxon>
        <taxon>Pseudomonadota</taxon>
        <taxon>Gammaproteobacteria</taxon>
        <taxon>Enterobacterales</taxon>
        <taxon>Enterobacteriaceae</taxon>
        <taxon>Escherichia</taxon>
    </lineage>
</organism>
<keyword id="KW-0963">Cytoplasm</keyword>
<keyword id="KW-0238">DNA-binding</keyword>
<keyword id="KW-0678">Repressor</keyword>
<keyword id="KW-0804">Transcription</keyword>
<keyword id="KW-0805">Transcription regulation</keyword>
<dbReference type="EMBL" id="CP000247">
    <property type="protein sequence ID" value="ABG70142.1"/>
    <property type="molecule type" value="Genomic_DNA"/>
</dbReference>
<dbReference type="RefSeq" id="WP_000019944.1">
    <property type="nucleotide sequence ID" value="NC_008253.1"/>
</dbReference>
<dbReference type="SMR" id="Q0TFY7"/>
<dbReference type="GeneID" id="93775089"/>
<dbReference type="KEGG" id="ecp:ECP_2143"/>
<dbReference type="HOGENOM" id="CLU_130332_3_0_6"/>
<dbReference type="Proteomes" id="UP000009182">
    <property type="component" value="Chromosome"/>
</dbReference>
<dbReference type="GO" id="GO:0005737">
    <property type="term" value="C:cytoplasm"/>
    <property type="evidence" value="ECO:0007669"/>
    <property type="project" value="UniProtKB-SubCell"/>
</dbReference>
<dbReference type="GO" id="GO:0003677">
    <property type="term" value="F:DNA binding"/>
    <property type="evidence" value="ECO:0007669"/>
    <property type="project" value="UniProtKB-KW"/>
</dbReference>
<dbReference type="GO" id="GO:0046872">
    <property type="term" value="F:metal ion binding"/>
    <property type="evidence" value="ECO:0007669"/>
    <property type="project" value="InterPro"/>
</dbReference>
<dbReference type="GO" id="GO:0045892">
    <property type="term" value="P:negative regulation of DNA-templated transcription"/>
    <property type="evidence" value="ECO:0007669"/>
    <property type="project" value="UniProtKB-ARBA"/>
</dbReference>
<dbReference type="CDD" id="cd10153">
    <property type="entry name" value="RcnR-FrmR-like_DUF156"/>
    <property type="match status" value="1"/>
</dbReference>
<dbReference type="FunFam" id="1.20.58.1000:FF:000001">
    <property type="entry name" value="Transcriptional repressor RcnR"/>
    <property type="match status" value="1"/>
</dbReference>
<dbReference type="Gene3D" id="1.20.58.1000">
    <property type="entry name" value="Metal-sensitive repressor, helix protomer"/>
    <property type="match status" value="1"/>
</dbReference>
<dbReference type="InterPro" id="IPR003735">
    <property type="entry name" value="Metal_Tscrpt_repr"/>
</dbReference>
<dbReference type="InterPro" id="IPR038390">
    <property type="entry name" value="Metal_Tscrpt_repr_sf"/>
</dbReference>
<dbReference type="NCBIfam" id="NF011613">
    <property type="entry name" value="PRK15039.1"/>
    <property type="match status" value="1"/>
</dbReference>
<dbReference type="PANTHER" id="PTHR33677">
    <property type="entry name" value="TRANSCRIPTIONAL REPRESSOR FRMR-RELATED"/>
    <property type="match status" value="1"/>
</dbReference>
<dbReference type="PANTHER" id="PTHR33677:SF1">
    <property type="entry name" value="TRANSCRIPTIONAL REPRESSOR RCNR"/>
    <property type="match status" value="1"/>
</dbReference>
<dbReference type="Pfam" id="PF02583">
    <property type="entry name" value="Trns_repr_metal"/>
    <property type="match status" value="1"/>
</dbReference>
<proteinExistence type="inferred from homology"/>
<protein>
    <recommendedName>
        <fullName>Transcriptional repressor RcnR</fullName>
    </recommendedName>
</protein>
<accession>Q0TFY7</accession>